<feature type="chain" id="PRO_1000013464" description="Large ribosomal subunit protein bL34">
    <location>
        <begin position="1"/>
        <end position="44"/>
    </location>
</feature>
<feature type="region of interest" description="Disordered" evidence="2">
    <location>
        <begin position="1"/>
        <end position="44"/>
    </location>
</feature>
<sequence>MKRTYQPSKIRRQRKHGFRHRMSTKNGRRVLAARRRKGRKVLSA</sequence>
<name>RL34_STRPC</name>
<protein>
    <recommendedName>
        <fullName evidence="1">Large ribosomal subunit protein bL34</fullName>
    </recommendedName>
    <alternativeName>
        <fullName evidence="3">50S ribosomal protein L34</fullName>
    </alternativeName>
</protein>
<organism>
    <name type="scientific">Streptococcus pyogenes serotype M12 (strain MGAS9429)</name>
    <dbReference type="NCBI Taxonomy" id="370551"/>
    <lineage>
        <taxon>Bacteria</taxon>
        <taxon>Bacillati</taxon>
        <taxon>Bacillota</taxon>
        <taxon>Bacilli</taxon>
        <taxon>Lactobacillales</taxon>
        <taxon>Streptococcaceae</taxon>
        <taxon>Streptococcus</taxon>
    </lineage>
</organism>
<keyword id="KW-0687">Ribonucleoprotein</keyword>
<keyword id="KW-0689">Ribosomal protein</keyword>
<gene>
    <name evidence="1" type="primary">rpmH</name>
    <name type="ordered locus">MGAS9429_Spy0212</name>
</gene>
<comment type="similarity">
    <text evidence="1">Belongs to the bacterial ribosomal protein bL34 family.</text>
</comment>
<proteinExistence type="inferred from homology"/>
<accession>Q1JNJ9</accession>
<dbReference type="EMBL" id="CP000259">
    <property type="protein sequence ID" value="ABF31400.1"/>
    <property type="molecule type" value="Genomic_DNA"/>
</dbReference>
<dbReference type="RefSeq" id="WP_002885866.1">
    <property type="nucleotide sequence ID" value="NC_008021.1"/>
</dbReference>
<dbReference type="SMR" id="Q1JNJ9"/>
<dbReference type="GeneID" id="93923177"/>
<dbReference type="KEGG" id="spk:MGAS9429_Spy0212"/>
<dbReference type="HOGENOM" id="CLU_129938_2_0_9"/>
<dbReference type="Proteomes" id="UP000002433">
    <property type="component" value="Chromosome"/>
</dbReference>
<dbReference type="GO" id="GO:1990904">
    <property type="term" value="C:ribonucleoprotein complex"/>
    <property type="evidence" value="ECO:0007669"/>
    <property type="project" value="UniProtKB-KW"/>
</dbReference>
<dbReference type="GO" id="GO:0005840">
    <property type="term" value="C:ribosome"/>
    <property type="evidence" value="ECO:0007669"/>
    <property type="project" value="UniProtKB-KW"/>
</dbReference>
<dbReference type="GO" id="GO:0003735">
    <property type="term" value="F:structural constituent of ribosome"/>
    <property type="evidence" value="ECO:0007669"/>
    <property type="project" value="InterPro"/>
</dbReference>
<dbReference type="GO" id="GO:0006412">
    <property type="term" value="P:translation"/>
    <property type="evidence" value="ECO:0007669"/>
    <property type="project" value="UniProtKB-UniRule"/>
</dbReference>
<dbReference type="FunFam" id="1.10.287.3980:FF:000001">
    <property type="entry name" value="Mitochondrial ribosomal protein L34"/>
    <property type="match status" value="1"/>
</dbReference>
<dbReference type="Gene3D" id="1.10.287.3980">
    <property type="match status" value="1"/>
</dbReference>
<dbReference type="HAMAP" id="MF_00391">
    <property type="entry name" value="Ribosomal_bL34"/>
    <property type="match status" value="1"/>
</dbReference>
<dbReference type="InterPro" id="IPR000271">
    <property type="entry name" value="Ribosomal_bL34"/>
</dbReference>
<dbReference type="InterPro" id="IPR020939">
    <property type="entry name" value="Ribosomal_bL34_CS"/>
</dbReference>
<dbReference type="NCBIfam" id="TIGR01030">
    <property type="entry name" value="rpmH_bact"/>
    <property type="match status" value="1"/>
</dbReference>
<dbReference type="PANTHER" id="PTHR14503:SF4">
    <property type="entry name" value="LARGE RIBOSOMAL SUBUNIT PROTEIN BL34M"/>
    <property type="match status" value="1"/>
</dbReference>
<dbReference type="PANTHER" id="PTHR14503">
    <property type="entry name" value="MITOCHONDRIAL RIBOSOMAL PROTEIN 34 FAMILY MEMBER"/>
    <property type="match status" value="1"/>
</dbReference>
<dbReference type="Pfam" id="PF00468">
    <property type="entry name" value="Ribosomal_L34"/>
    <property type="match status" value="1"/>
</dbReference>
<dbReference type="PROSITE" id="PS00784">
    <property type="entry name" value="RIBOSOMAL_L34"/>
    <property type="match status" value="1"/>
</dbReference>
<evidence type="ECO:0000255" key="1">
    <source>
        <dbReference type="HAMAP-Rule" id="MF_00391"/>
    </source>
</evidence>
<evidence type="ECO:0000256" key="2">
    <source>
        <dbReference type="SAM" id="MobiDB-lite"/>
    </source>
</evidence>
<evidence type="ECO:0000305" key="3"/>
<reference key="1">
    <citation type="journal article" date="2006" name="Proc. Natl. Acad. Sci. U.S.A.">
        <title>Molecular genetic anatomy of inter- and intraserotype variation in the human bacterial pathogen group A Streptococcus.</title>
        <authorList>
            <person name="Beres S.B."/>
            <person name="Richter E.W."/>
            <person name="Nagiec M.J."/>
            <person name="Sumby P."/>
            <person name="Porcella S.F."/>
            <person name="DeLeo F.R."/>
            <person name="Musser J.M."/>
        </authorList>
    </citation>
    <scope>NUCLEOTIDE SEQUENCE [LARGE SCALE GENOMIC DNA]</scope>
    <source>
        <strain>MGAS9429</strain>
    </source>
</reference>